<feature type="chain" id="PRO_0000427938" description="NADH-quinone oxidoreductase subunit F">
    <location>
        <begin position="1"/>
        <end position="445"/>
    </location>
</feature>
<feature type="binding site" evidence="1">
    <location>
        <begin position="61"/>
        <end position="70"/>
    </location>
    <ligand>
        <name>NAD(+)</name>
        <dbReference type="ChEBI" id="CHEBI:57540"/>
    </ligand>
</feature>
<feature type="binding site" evidence="1">
    <location>
        <begin position="177"/>
        <end position="224"/>
    </location>
    <ligand>
        <name>FMN</name>
        <dbReference type="ChEBI" id="CHEBI:58210"/>
    </ligand>
</feature>
<feature type="binding site" evidence="2">
    <location>
        <position position="353"/>
    </location>
    <ligand>
        <name>[4Fe-4S] cluster</name>
        <dbReference type="ChEBI" id="CHEBI:49883"/>
    </ligand>
</feature>
<feature type="binding site" evidence="2">
    <location>
        <position position="356"/>
    </location>
    <ligand>
        <name>[4Fe-4S] cluster</name>
        <dbReference type="ChEBI" id="CHEBI:49883"/>
    </ligand>
</feature>
<feature type="binding site" evidence="2">
    <location>
        <position position="359"/>
    </location>
    <ligand>
        <name>[4Fe-4S] cluster</name>
        <dbReference type="ChEBI" id="CHEBI:49883"/>
    </ligand>
</feature>
<feature type="binding site" evidence="2">
    <location>
        <position position="399"/>
    </location>
    <ligand>
        <name>[4Fe-4S] cluster</name>
        <dbReference type="ChEBI" id="CHEBI:49883"/>
    </ligand>
</feature>
<proteinExistence type="inferred from homology"/>
<keyword id="KW-0004">4Fe-4S</keyword>
<keyword id="KW-0285">Flavoprotein</keyword>
<keyword id="KW-0288">FMN</keyword>
<keyword id="KW-0408">Iron</keyword>
<keyword id="KW-0411">Iron-sulfur</keyword>
<keyword id="KW-0479">Metal-binding</keyword>
<keyword id="KW-0520">NAD</keyword>
<keyword id="KW-0874">Quinone</keyword>
<keyword id="KW-1185">Reference proteome</keyword>
<keyword id="KW-1278">Translocase</keyword>
<reference key="1">
    <citation type="journal article" date="2002" name="J. Bacteriol.">
        <title>Whole-genome comparison of Mycobacterium tuberculosis clinical and laboratory strains.</title>
        <authorList>
            <person name="Fleischmann R.D."/>
            <person name="Alland D."/>
            <person name="Eisen J.A."/>
            <person name="Carpenter L."/>
            <person name="White O."/>
            <person name="Peterson J.D."/>
            <person name="DeBoy R.T."/>
            <person name="Dodson R.J."/>
            <person name="Gwinn M.L."/>
            <person name="Haft D.H."/>
            <person name="Hickey E.K."/>
            <person name="Kolonay J.F."/>
            <person name="Nelson W.C."/>
            <person name="Umayam L.A."/>
            <person name="Ermolaeva M.D."/>
            <person name="Salzberg S.L."/>
            <person name="Delcher A."/>
            <person name="Utterback T.R."/>
            <person name="Weidman J.F."/>
            <person name="Khouri H.M."/>
            <person name="Gill J."/>
            <person name="Mikula A."/>
            <person name="Bishai W."/>
            <person name="Jacobs W.R. Jr."/>
            <person name="Venter J.C."/>
            <person name="Fraser C.M."/>
        </authorList>
    </citation>
    <scope>NUCLEOTIDE SEQUENCE [LARGE SCALE GENOMIC DNA]</scope>
    <source>
        <strain>CDC 1551 / Oshkosh</strain>
    </source>
</reference>
<comment type="function">
    <text evidence="1">NDH-1 shuttles electrons from NADH, via FMN and iron-sulfur (Fe-S) centers, to quinones in the respiratory chain. The immediate electron acceptor for the enzyme in this species is believed to be menaquinone. Couples the redox reaction to proton translocation (for every two electrons transferred, four hydrogen ions are translocated across the cytoplasmic membrane), and thus conserves the redox energy in a proton gradient (By similarity).</text>
</comment>
<comment type="catalytic activity">
    <reaction>
        <text>a quinone + NADH + 5 H(+)(in) = a quinol + NAD(+) + 4 H(+)(out)</text>
        <dbReference type="Rhea" id="RHEA:57888"/>
        <dbReference type="ChEBI" id="CHEBI:15378"/>
        <dbReference type="ChEBI" id="CHEBI:24646"/>
        <dbReference type="ChEBI" id="CHEBI:57540"/>
        <dbReference type="ChEBI" id="CHEBI:57945"/>
        <dbReference type="ChEBI" id="CHEBI:132124"/>
    </reaction>
</comment>
<comment type="cofactor">
    <cofactor evidence="3">
        <name>FMN</name>
        <dbReference type="ChEBI" id="CHEBI:58210"/>
    </cofactor>
    <text evidence="3">Binds 1 FMN.</text>
</comment>
<comment type="cofactor">
    <cofactor evidence="3">
        <name>[4Fe-4S] cluster</name>
        <dbReference type="ChEBI" id="CHEBI:49883"/>
    </cofactor>
    <text evidence="3">Binds 1 [4Fe-4S] cluster.</text>
</comment>
<comment type="similarity">
    <text evidence="3">Belongs to the complex I 51 kDa subunit family.</text>
</comment>
<organism>
    <name type="scientific">Mycobacterium tuberculosis (strain CDC 1551 / Oshkosh)</name>
    <dbReference type="NCBI Taxonomy" id="83331"/>
    <lineage>
        <taxon>Bacteria</taxon>
        <taxon>Bacillati</taxon>
        <taxon>Actinomycetota</taxon>
        <taxon>Actinomycetes</taxon>
        <taxon>Mycobacteriales</taxon>
        <taxon>Mycobacteriaceae</taxon>
        <taxon>Mycobacterium</taxon>
        <taxon>Mycobacterium tuberculosis complex</taxon>
    </lineage>
</organism>
<sequence>MTTQATPLTPVISRHWDDPESWTLATYQRHDRYRGYQALQKALTMPPDDVISIVKDSGLRGRGGAGFATGTKWSFIPQGDTGAAAKPHYLVVNADESEPGTCKDIPLMLATPHVLIEGVIIAAYAIRAHHAFVYVRGEVVPVLRRLHNAVAEAYAAGFLGRNIGGSGFDLELVVHAGAGAYICGEETALLDSLEGRRGQPRLRPPFPAVAGLYGCPTVINNVETIASVPSIILGGIDWFRSMGSEKSPGFTLYSLSGHVTRPGQYEAPLGITLRELLDYAGGVRAGHRLKFWTPGGSSTPLLTDEHLDVPLDYEGVGAAGSMLGTKALEIFDETTCVVRAVRRWTEFYKHESCGKCTPCREGTFWLDKIYERLETGRGSHEDIDKLLDISDSILGKSFCALGDGAASPVMSSIKHFRDEYLAHVEGGGCPFDPRDSMLVANGVDA</sequence>
<accession>P9WIV6</accession>
<accession>L0TDA7</accession>
<accession>P65567</accession>
<accession>P95176</accession>
<evidence type="ECO:0000250" key="1"/>
<evidence type="ECO:0000255" key="2"/>
<evidence type="ECO:0000305" key="3"/>
<protein>
    <recommendedName>
        <fullName>NADH-quinone oxidoreductase subunit F</fullName>
        <ecNumber>7.1.1.-</ecNumber>
    </recommendedName>
    <alternativeName>
        <fullName>NADH dehydrogenase I subunit F</fullName>
    </alternativeName>
    <alternativeName>
        <fullName>NDH-1 subunit F</fullName>
    </alternativeName>
</protein>
<dbReference type="EC" id="7.1.1.-"/>
<dbReference type="EMBL" id="AE000516">
    <property type="protein sequence ID" value="AAK47577.1"/>
    <property type="molecule type" value="Genomic_DNA"/>
</dbReference>
<dbReference type="PIR" id="G70647">
    <property type="entry name" value="G70647"/>
</dbReference>
<dbReference type="RefSeq" id="WP_003416439.1">
    <property type="nucleotide sequence ID" value="NZ_KK341227.1"/>
</dbReference>
<dbReference type="SMR" id="P9WIV6"/>
<dbReference type="GeneID" id="45427137"/>
<dbReference type="KEGG" id="mtc:MT3238"/>
<dbReference type="PATRIC" id="fig|83331.31.peg.3486"/>
<dbReference type="HOGENOM" id="CLU_014881_0_1_11"/>
<dbReference type="Proteomes" id="UP000001020">
    <property type="component" value="Chromosome"/>
</dbReference>
<dbReference type="GO" id="GO:0051539">
    <property type="term" value="F:4 iron, 4 sulfur cluster binding"/>
    <property type="evidence" value="ECO:0007669"/>
    <property type="project" value="UniProtKB-KW"/>
</dbReference>
<dbReference type="GO" id="GO:0010181">
    <property type="term" value="F:FMN binding"/>
    <property type="evidence" value="ECO:0007669"/>
    <property type="project" value="InterPro"/>
</dbReference>
<dbReference type="GO" id="GO:0046872">
    <property type="term" value="F:metal ion binding"/>
    <property type="evidence" value="ECO:0007669"/>
    <property type="project" value="UniProtKB-KW"/>
</dbReference>
<dbReference type="GO" id="GO:0051287">
    <property type="term" value="F:NAD binding"/>
    <property type="evidence" value="ECO:0007669"/>
    <property type="project" value="InterPro"/>
</dbReference>
<dbReference type="GO" id="GO:0008137">
    <property type="term" value="F:NADH dehydrogenase (ubiquinone) activity"/>
    <property type="evidence" value="ECO:0007669"/>
    <property type="project" value="InterPro"/>
</dbReference>
<dbReference type="GO" id="GO:0048038">
    <property type="term" value="F:quinone binding"/>
    <property type="evidence" value="ECO:0007669"/>
    <property type="project" value="UniProtKB-KW"/>
</dbReference>
<dbReference type="GO" id="GO:0045333">
    <property type="term" value="P:cellular respiration"/>
    <property type="evidence" value="ECO:0007669"/>
    <property type="project" value="TreeGrafter"/>
</dbReference>
<dbReference type="FunFam" id="1.20.1440.230:FF:000001">
    <property type="entry name" value="Mitochondrial NADH dehydrogenase flavoprotein 1"/>
    <property type="match status" value="1"/>
</dbReference>
<dbReference type="FunFam" id="3.40.50.11540:FF:000001">
    <property type="entry name" value="NADH dehydrogenase [ubiquinone] flavoprotein 1, mitochondrial"/>
    <property type="match status" value="1"/>
</dbReference>
<dbReference type="FunFam" id="3.10.20.600:FF:000003">
    <property type="entry name" value="NADH-quinone oxidoreductase subunit F"/>
    <property type="match status" value="1"/>
</dbReference>
<dbReference type="Gene3D" id="3.10.20.600">
    <property type="match status" value="1"/>
</dbReference>
<dbReference type="Gene3D" id="6.10.250.1450">
    <property type="match status" value="1"/>
</dbReference>
<dbReference type="Gene3D" id="3.40.50.11540">
    <property type="entry name" value="NADH-ubiquinone oxidoreductase 51kDa subunit"/>
    <property type="match status" value="1"/>
</dbReference>
<dbReference type="Gene3D" id="1.20.1440.230">
    <property type="entry name" value="NADH-ubiquinone oxidoreductase 51kDa subunit, iron-sulphur binding domain"/>
    <property type="match status" value="1"/>
</dbReference>
<dbReference type="InterPro" id="IPR050837">
    <property type="entry name" value="ComplexI_51kDa_subunit"/>
</dbReference>
<dbReference type="InterPro" id="IPR001949">
    <property type="entry name" value="NADH-UbQ_OxRdtase_51kDa_CS"/>
</dbReference>
<dbReference type="InterPro" id="IPR011537">
    <property type="entry name" value="NADH-UbQ_OxRdtase_suF"/>
</dbReference>
<dbReference type="InterPro" id="IPR011538">
    <property type="entry name" value="Nuo51_FMN-bd"/>
</dbReference>
<dbReference type="InterPro" id="IPR037225">
    <property type="entry name" value="Nuo51_FMN-bd_sf"/>
</dbReference>
<dbReference type="InterPro" id="IPR019575">
    <property type="entry name" value="Nuop51_4Fe4S-bd"/>
</dbReference>
<dbReference type="InterPro" id="IPR037207">
    <property type="entry name" value="Nuop51_4Fe4S-bd_sf"/>
</dbReference>
<dbReference type="InterPro" id="IPR019554">
    <property type="entry name" value="Soluble_ligand-bd"/>
</dbReference>
<dbReference type="NCBIfam" id="TIGR01959">
    <property type="entry name" value="nuoF_fam"/>
    <property type="match status" value="1"/>
</dbReference>
<dbReference type="NCBIfam" id="NF010120">
    <property type="entry name" value="PRK13596.1"/>
    <property type="match status" value="1"/>
</dbReference>
<dbReference type="PANTHER" id="PTHR11780:SF10">
    <property type="entry name" value="NADH DEHYDROGENASE [UBIQUINONE] FLAVOPROTEIN 1, MITOCHONDRIAL"/>
    <property type="match status" value="1"/>
</dbReference>
<dbReference type="PANTHER" id="PTHR11780">
    <property type="entry name" value="NADH-UBIQUINONE OXIDOREDUCTASE FLAVOPROTEIN 1 NDUFV1"/>
    <property type="match status" value="1"/>
</dbReference>
<dbReference type="Pfam" id="PF01512">
    <property type="entry name" value="Complex1_51K"/>
    <property type="match status" value="1"/>
</dbReference>
<dbReference type="Pfam" id="PF10589">
    <property type="entry name" value="NADH_4Fe-4S"/>
    <property type="match status" value="1"/>
</dbReference>
<dbReference type="Pfam" id="PF10531">
    <property type="entry name" value="SLBB"/>
    <property type="match status" value="1"/>
</dbReference>
<dbReference type="SMART" id="SM00928">
    <property type="entry name" value="NADH_4Fe-4S"/>
    <property type="match status" value="1"/>
</dbReference>
<dbReference type="SUPFAM" id="SSF142019">
    <property type="entry name" value="Nqo1 FMN-binding domain-like"/>
    <property type="match status" value="1"/>
</dbReference>
<dbReference type="SUPFAM" id="SSF142984">
    <property type="entry name" value="Nqo1 middle domain-like"/>
    <property type="match status" value="1"/>
</dbReference>
<dbReference type="SUPFAM" id="SSF140490">
    <property type="entry name" value="Nqo1C-terminal domain-like"/>
    <property type="match status" value="1"/>
</dbReference>
<dbReference type="PROSITE" id="PS00644">
    <property type="entry name" value="COMPLEX1_51K_1"/>
    <property type="match status" value="1"/>
</dbReference>
<dbReference type="PROSITE" id="PS00645">
    <property type="entry name" value="COMPLEX1_51K_2"/>
    <property type="match status" value="1"/>
</dbReference>
<name>NUOF_MYCTO</name>
<gene>
    <name type="primary">nuoF</name>
    <name type="ordered locus">MT3238</name>
</gene>